<organism>
    <name type="scientific">Brassica napus</name>
    <name type="common">Rape</name>
    <dbReference type="NCBI Taxonomy" id="3708"/>
    <lineage>
        <taxon>Eukaryota</taxon>
        <taxon>Viridiplantae</taxon>
        <taxon>Streptophyta</taxon>
        <taxon>Embryophyta</taxon>
        <taxon>Tracheophyta</taxon>
        <taxon>Spermatophyta</taxon>
        <taxon>Magnoliopsida</taxon>
        <taxon>eudicotyledons</taxon>
        <taxon>Gunneridae</taxon>
        <taxon>Pentapetalae</taxon>
        <taxon>rosids</taxon>
        <taxon>malvids</taxon>
        <taxon>Brassicales</taxon>
        <taxon>Brassicaceae</taxon>
        <taxon>Brassiceae</taxon>
        <taxon>Brassica</taxon>
    </lineage>
</organism>
<name>AG_BRANA</name>
<protein>
    <recommendedName>
        <fullName>Floral homeotic protein AGAMOUS</fullName>
    </recommendedName>
</protein>
<accession>Q01540</accession>
<sequence length="252" mass="28778">MAYQMELGGESSPQRKAGRGKIEIKRIENTTNRQVTFCKRRNGLLKKAYELSVLCDAEVALIVFSSRGRLYEYSNNSVKGTIERYKKAISDNSNTGSVAEINAQYYQQESAKLRQQIISIQNSNRQLMGETIGSMSPKELRNLEGRLDRSVNRIRSKKNELLFAEIDYMQKREVDLHNDNQLLRAKIAENERNNPSMSLMPGGSNYEQIMPPPQTQPQPFDSRNYFQVAALQPNNHHYSSAGREDQTALQLV</sequence>
<feature type="chain" id="PRO_0000199446" description="Floral homeotic protein AGAMOUS">
    <location>
        <begin position="1"/>
        <end position="252"/>
    </location>
</feature>
<feature type="domain" description="MADS-box" evidence="1">
    <location>
        <begin position="19"/>
        <end position="73"/>
    </location>
</feature>
<feature type="domain" description="K-box" evidence="2">
    <location>
        <begin position="103"/>
        <end position="193"/>
    </location>
</feature>
<gene>
    <name type="primary">AG1</name>
</gene>
<comment type="function">
    <text>Probable transcription factor involved in regulating genes that determines stamen and carpel development in wild-type flowers.</text>
</comment>
<comment type="subcellular location">
    <subcellularLocation>
        <location>Nucleus</location>
    </subcellularLocation>
</comment>
<evidence type="ECO:0000255" key="1">
    <source>
        <dbReference type="PROSITE-ProRule" id="PRU00251"/>
    </source>
</evidence>
<evidence type="ECO:0000255" key="2">
    <source>
        <dbReference type="PROSITE-ProRule" id="PRU00629"/>
    </source>
</evidence>
<keyword id="KW-0010">Activator</keyword>
<keyword id="KW-0238">DNA-binding</keyword>
<keyword id="KW-0539">Nucleus</keyword>
<keyword id="KW-0804">Transcription</keyword>
<keyword id="KW-0805">Transcription regulation</keyword>
<proteinExistence type="evidence at transcript level"/>
<reference key="1">
    <citation type="journal article" date="1992" name="Cell">
        <title>Manipulation of flower structure in transgenic tobacco.</title>
        <authorList>
            <person name="Mandel M.A."/>
            <person name="Bowman J.L."/>
            <person name="Kempin S.A."/>
            <person name="Ma H."/>
            <person name="Meyerowitz E.M."/>
            <person name="Yanofsky M.F."/>
        </authorList>
    </citation>
    <scope>NUCLEOTIDE SEQUENCE [MRNA]</scope>
    <source>
        <strain>cv. Westar</strain>
    </source>
</reference>
<dbReference type="EMBL" id="M99415">
    <property type="protein sequence ID" value="AAA32985.1"/>
    <property type="molecule type" value="mRNA"/>
</dbReference>
<dbReference type="PIR" id="A43484">
    <property type="entry name" value="A43484"/>
</dbReference>
<dbReference type="RefSeq" id="NP_001303060.1">
    <property type="nucleotide sequence ID" value="NM_001316131.1"/>
</dbReference>
<dbReference type="RefSeq" id="XP_013668951.1">
    <property type="nucleotide sequence ID" value="XM_013813497.1"/>
</dbReference>
<dbReference type="SMR" id="Q01540"/>
<dbReference type="EnsemblPlants" id="CDX78909">
    <property type="protein sequence ID" value="CDX78909"/>
    <property type="gene ID" value="GSBRNA2T00131396001"/>
</dbReference>
<dbReference type="GeneID" id="106373304"/>
<dbReference type="Gramene" id="CDX78909">
    <property type="protein sequence ID" value="CDX78909"/>
    <property type="gene ID" value="GSBRNA2T00131396001"/>
</dbReference>
<dbReference type="KEGG" id="bna:106373304"/>
<dbReference type="OMA" id="KRETDLH"/>
<dbReference type="OrthoDB" id="1898716at2759"/>
<dbReference type="GO" id="GO:0005634">
    <property type="term" value="C:nucleus"/>
    <property type="evidence" value="ECO:0007669"/>
    <property type="project" value="UniProtKB-SubCell"/>
</dbReference>
<dbReference type="GO" id="GO:0003700">
    <property type="term" value="F:DNA-binding transcription factor activity"/>
    <property type="evidence" value="ECO:0007669"/>
    <property type="project" value="InterPro"/>
</dbReference>
<dbReference type="GO" id="GO:0046983">
    <property type="term" value="F:protein dimerization activity"/>
    <property type="evidence" value="ECO:0007669"/>
    <property type="project" value="InterPro"/>
</dbReference>
<dbReference type="GO" id="GO:0000977">
    <property type="term" value="F:RNA polymerase II transcription regulatory region sequence-specific DNA binding"/>
    <property type="evidence" value="ECO:0007669"/>
    <property type="project" value="InterPro"/>
</dbReference>
<dbReference type="GO" id="GO:0045944">
    <property type="term" value="P:positive regulation of transcription by RNA polymerase II"/>
    <property type="evidence" value="ECO:0007669"/>
    <property type="project" value="InterPro"/>
</dbReference>
<dbReference type="CDD" id="cd00265">
    <property type="entry name" value="MADS_MEF2_like"/>
    <property type="match status" value="1"/>
</dbReference>
<dbReference type="FunFam" id="3.40.1810.10:FF:000009">
    <property type="entry name" value="agamous-like MADS-box protein AGL11"/>
    <property type="match status" value="1"/>
</dbReference>
<dbReference type="Gene3D" id="3.40.1810.10">
    <property type="entry name" value="Transcription factor, MADS-box"/>
    <property type="match status" value="1"/>
</dbReference>
<dbReference type="InterPro" id="IPR050142">
    <property type="entry name" value="MADS-box/MEF2_TF"/>
</dbReference>
<dbReference type="InterPro" id="IPR033896">
    <property type="entry name" value="MEF2-like_N"/>
</dbReference>
<dbReference type="InterPro" id="IPR002487">
    <property type="entry name" value="TF_Kbox"/>
</dbReference>
<dbReference type="InterPro" id="IPR002100">
    <property type="entry name" value="TF_MADSbox"/>
</dbReference>
<dbReference type="InterPro" id="IPR036879">
    <property type="entry name" value="TF_MADSbox_sf"/>
</dbReference>
<dbReference type="PANTHER" id="PTHR48019">
    <property type="entry name" value="SERUM RESPONSE FACTOR HOMOLOG"/>
    <property type="match status" value="1"/>
</dbReference>
<dbReference type="Pfam" id="PF01486">
    <property type="entry name" value="K-box"/>
    <property type="match status" value="1"/>
</dbReference>
<dbReference type="Pfam" id="PF00319">
    <property type="entry name" value="SRF-TF"/>
    <property type="match status" value="1"/>
</dbReference>
<dbReference type="PRINTS" id="PR00404">
    <property type="entry name" value="MADSDOMAIN"/>
</dbReference>
<dbReference type="SMART" id="SM00432">
    <property type="entry name" value="MADS"/>
    <property type="match status" value="1"/>
</dbReference>
<dbReference type="SUPFAM" id="SSF55455">
    <property type="entry name" value="SRF-like"/>
    <property type="match status" value="1"/>
</dbReference>
<dbReference type="PROSITE" id="PS51297">
    <property type="entry name" value="K_BOX"/>
    <property type="match status" value="1"/>
</dbReference>
<dbReference type="PROSITE" id="PS00350">
    <property type="entry name" value="MADS_BOX_1"/>
    <property type="match status" value="1"/>
</dbReference>
<dbReference type="PROSITE" id="PS50066">
    <property type="entry name" value="MADS_BOX_2"/>
    <property type="match status" value="1"/>
</dbReference>